<organism>
    <name type="scientific">Geobacillus thermodenitrificans (strain NG80-2)</name>
    <dbReference type="NCBI Taxonomy" id="420246"/>
    <lineage>
        <taxon>Bacteria</taxon>
        <taxon>Bacillati</taxon>
        <taxon>Bacillota</taxon>
        <taxon>Bacilli</taxon>
        <taxon>Bacillales</taxon>
        <taxon>Anoxybacillaceae</taxon>
        <taxon>Geobacillus</taxon>
    </lineage>
</organism>
<feature type="chain" id="PRO_1000148466" description="Hut operon positive regulatory protein">
    <location>
        <begin position="1"/>
        <end position="149"/>
    </location>
</feature>
<feature type="helix" evidence="2">
    <location>
        <begin position="9"/>
        <end position="18"/>
    </location>
</feature>
<feature type="turn" evidence="2">
    <location>
        <begin position="21"/>
        <end position="23"/>
    </location>
</feature>
<feature type="helix" evidence="2">
    <location>
        <begin position="25"/>
        <end position="34"/>
    </location>
</feature>
<feature type="strand" evidence="2">
    <location>
        <begin position="37"/>
        <end position="47"/>
    </location>
</feature>
<feature type="helix" evidence="2">
    <location>
        <begin position="48"/>
        <end position="61"/>
    </location>
</feature>
<feature type="helix" evidence="2">
    <location>
        <begin position="70"/>
        <end position="88"/>
    </location>
</feature>
<feature type="strand" evidence="3">
    <location>
        <begin position="89"/>
        <end position="91"/>
    </location>
</feature>
<feature type="helix" evidence="2">
    <location>
        <begin position="95"/>
        <end position="97"/>
    </location>
</feature>
<feature type="strand" evidence="2">
    <location>
        <begin position="100"/>
        <end position="110"/>
    </location>
</feature>
<feature type="strand" evidence="2">
    <location>
        <begin position="113"/>
        <end position="115"/>
    </location>
</feature>
<feature type="helix" evidence="2">
    <location>
        <begin position="116"/>
        <end position="118"/>
    </location>
</feature>
<feature type="strand" evidence="2">
    <location>
        <begin position="120"/>
        <end position="131"/>
    </location>
</feature>
<feature type="strand" evidence="2">
    <location>
        <begin position="137"/>
        <end position="149"/>
    </location>
</feature>
<evidence type="ECO:0000255" key="1">
    <source>
        <dbReference type="HAMAP-Rule" id="MF_00779"/>
    </source>
</evidence>
<evidence type="ECO:0007829" key="2">
    <source>
        <dbReference type="PDB" id="4OK9"/>
    </source>
</evidence>
<evidence type="ECO:0007829" key="3">
    <source>
        <dbReference type="PDB" id="4OKQ"/>
    </source>
</evidence>
<dbReference type="EMBL" id="CP000557">
    <property type="protein sequence ID" value="ABO65743.1"/>
    <property type="molecule type" value="Genomic_DNA"/>
</dbReference>
<dbReference type="RefSeq" id="WP_008881231.1">
    <property type="nucleotide sequence ID" value="NC_009328.1"/>
</dbReference>
<dbReference type="PDB" id="4OK9">
    <property type="method" value="X-ray"/>
    <property type="resolution" value="1.91 A"/>
    <property type="chains" value="A/B=1-149"/>
</dbReference>
<dbReference type="PDB" id="4OKQ">
    <property type="method" value="X-ray"/>
    <property type="resolution" value="2.50 A"/>
    <property type="chains" value="A/B=1-149"/>
</dbReference>
<dbReference type="PDBsum" id="4OK9"/>
<dbReference type="PDBsum" id="4OKQ"/>
<dbReference type="SMR" id="A4IK89"/>
<dbReference type="GeneID" id="87622031"/>
<dbReference type="KEGG" id="gtn:GTNG_0361"/>
<dbReference type="eggNOG" id="ENOG502ZFIH">
    <property type="taxonomic scope" value="Bacteria"/>
</dbReference>
<dbReference type="HOGENOM" id="CLU_148478_0_0_9"/>
<dbReference type="EvolutionaryTrace" id="A4IK89"/>
<dbReference type="Proteomes" id="UP000001578">
    <property type="component" value="Chromosome"/>
</dbReference>
<dbReference type="GO" id="GO:0003729">
    <property type="term" value="F:mRNA binding"/>
    <property type="evidence" value="ECO:0007669"/>
    <property type="project" value="UniProtKB-UniRule"/>
</dbReference>
<dbReference type="GO" id="GO:0006547">
    <property type="term" value="P:L-histidine metabolic process"/>
    <property type="evidence" value="ECO:0007669"/>
    <property type="project" value="UniProtKB-UniRule"/>
</dbReference>
<dbReference type="GO" id="GO:0010628">
    <property type="term" value="P:positive regulation of gene expression"/>
    <property type="evidence" value="ECO:0007669"/>
    <property type="project" value="UniProtKB-UniRule"/>
</dbReference>
<dbReference type="Gene3D" id="3.40.1510.10">
    <property type="entry name" value="Hut operon regulatory protein HutP"/>
    <property type="match status" value="1"/>
</dbReference>
<dbReference type="HAMAP" id="MF_00779">
    <property type="entry name" value="HutP"/>
    <property type="match status" value="1"/>
</dbReference>
<dbReference type="InterPro" id="IPR015111">
    <property type="entry name" value="Regulatory_HutP"/>
</dbReference>
<dbReference type="InterPro" id="IPR023552">
    <property type="entry name" value="Regulatory_HutP_bacillales"/>
</dbReference>
<dbReference type="InterPro" id="IPR036482">
    <property type="entry name" value="Regulatory_HutP_sf"/>
</dbReference>
<dbReference type="NCBIfam" id="NF002838">
    <property type="entry name" value="PRK03065.1"/>
    <property type="match status" value="1"/>
</dbReference>
<dbReference type="Pfam" id="PF09021">
    <property type="entry name" value="HutP"/>
    <property type="match status" value="1"/>
</dbReference>
<dbReference type="SUPFAM" id="SSF111064">
    <property type="entry name" value="Hut operon positive regulatory protein HutP"/>
    <property type="match status" value="1"/>
</dbReference>
<accession>A4IK89</accession>
<reference key="1">
    <citation type="journal article" date="2007" name="Proc. Natl. Acad. Sci. U.S.A.">
        <title>Genome and proteome of long-chain alkane degrading Geobacillus thermodenitrificans NG80-2 isolated from a deep-subsurface oil reservoir.</title>
        <authorList>
            <person name="Feng L."/>
            <person name="Wang W."/>
            <person name="Cheng J."/>
            <person name="Ren Y."/>
            <person name="Zhao G."/>
            <person name="Gao C."/>
            <person name="Tang Y."/>
            <person name="Liu X."/>
            <person name="Han W."/>
            <person name="Peng X."/>
            <person name="Liu R."/>
            <person name="Wang L."/>
        </authorList>
    </citation>
    <scope>NUCLEOTIDE SEQUENCE [LARGE SCALE GENOMIC DNA]</scope>
    <source>
        <strain>NG80-2</strain>
    </source>
</reference>
<gene>
    <name evidence="1" type="primary">hutP</name>
    <name type="ordered locus">GTNG_0361</name>
</gene>
<sequence>MGKEKSVRIGRQALLLAMLDEGEEGAILDELRASNWRYCQGRVGAMEPQKIVAAIETAAKRHEVVDGSLYRDMHALYHAILEAVHGVTRGQVELGDLLRTAGLRFAVVRGTPYEQPKEGEWIAVALYGTIGAPVRGLEHEAVGLGINHI</sequence>
<name>HUTP_GEOTN</name>
<comment type="function">
    <text evidence="1">Antiterminator that binds to cis-acting regulatory sequences on the mRNA in the presence of histidine, thereby suppressing transcription termination and activating the hut operon for histidine utilization.</text>
</comment>
<comment type="subunit">
    <text evidence="1">Homohexamer.</text>
</comment>
<comment type="similarity">
    <text evidence="1">Belongs to the HutP family.</text>
</comment>
<proteinExistence type="evidence at protein level"/>
<keyword id="KW-0002">3D-structure</keyword>
<keyword id="KW-0010">Activator</keyword>
<keyword id="KW-0369">Histidine metabolism</keyword>
<keyword id="KW-0694">RNA-binding</keyword>
<keyword id="KW-0804">Transcription</keyword>
<keyword id="KW-0805">Transcription regulation</keyword>
<protein>
    <recommendedName>
        <fullName evidence="1">Hut operon positive regulatory protein</fullName>
    </recommendedName>
</protein>